<accession>Q28F89</accession>
<accession>Q28GI1</accession>
<organism>
    <name type="scientific">Xenopus tropicalis</name>
    <name type="common">Western clawed frog</name>
    <name type="synonym">Silurana tropicalis</name>
    <dbReference type="NCBI Taxonomy" id="8364"/>
    <lineage>
        <taxon>Eukaryota</taxon>
        <taxon>Metazoa</taxon>
        <taxon>Chordata</taxon>
        <taxon>Craniata</taxon>
        <taxon>Vertebrata</taxon>
        <taxon>Euteleostomi</taxon>
        <taxon>Amphibia</taxon>
        <taxon>Batrachia</taxon>
        <taxon>Anura</taxon>
        <taxon>Pipoidea</taxon>
        <taxon>Pipidae</taxon>
        <taxon>Xenopodinae</taxon>
        <taxon>Xenopus</taxon>
        <taxon>Silurana</taxon>
    </lineage>
</organism>
<feature type="chain" id="PRO_0000390434" description="Ubiquitin-conjugating enzyme E2 S">
    <location>
        <begin position="1"/>
        <end position="211"/>
    </location>
</feature>
<feature type="domain" description="UBC core" evidence="1">
    <location>
        <begin position="11"/>
        <end position="157"/>
    </location>
</feature>
<feature type="region of interest" description="Disordered" evidence="3">
    <location>
        <begin position="157"/>
        <end position="211"/>
    </location>
</feature>
<feature type="compositionally biased region" description="Basic residues" evidence="3">
    <location>
        <begin position="197"/>
        <end position="211"/>
    </location>
</feature>
<feature type="active site" description="Glycyl thioester intermediate" evidence="1 2">
    <location>
        <position position="95"/>
    </location>
</feature>
<name>UBE2S_XENTR</name>
<reference key="1">
    <citation type="submission" date="2006-10" db="EMBL/GenBank/DDBJ databases">
        <authorList>
            <consortium name="Sanger Xenopus tropicalis EST/cDNA project"/>
        </authorList>
    </citation>
    <scope>NUCLEOTIDE SEQUENCE [LARGE SCALE MRNA]</scope>
    <source>
        <tissue>Egg</tissue>
    </source>
</reference>
<reference key="2">
    <citation type="submission" date="2008-11" db="EMBL/GenBank/DDBJ databases">
        <authorList>
            <consortium name="NIH - Xenopus Gene Collection (XGC) project"/>
        </authorList>
    </citation>
    <scope>NUCLEOTIDE SEQUENCE [LARGE SCALE MRNA]</scope>
    <source>
        <tissue>Neurula</tissue>
    </source>
</reference>
<keyword id="KW-0067">ATP-binding</keyword>
<keyword id="KW-0131">Cell cycle</keyword>
<keyword id="KW-0132">Cell division</keyword>
<keyword id="KW-0547">Nucleotide-binding</keyword>
<keyword id="KW-1185">Reference proteome</keyword>
<keyword id="KW-0808">Transferase</keyword>
<keyword id="KW-0833">Ubl conjugation pathway</keyword>
<sequence length="211" mass="23288">MNSNVENLPPHIIRQVYKEVSTLTSDPPEGIKIIPNEEDITDVQVNIEGPEGTPYAGGIFRMKLILGKDFPAAPPKGYFLTKIFHPNVSTNGEICVNVLKKDWKAELGIRHVLLTIKCLLIHPNPESALNEEAGRLLLENYEEYASRARLMTEIHAQGSSLRGKDPTDPCSSASATLVSGDGPMAKKHAGDRDKKLAAKKKTDKKRALRRL</sequence>
<evidence type="ECO:0000255" key="1">
    <source>
        <dbReference type="PROSITE-ProRule" id="PRU00388"/>
    </source>
</evidence>
<evidence type="ECO:0000255" key="2">
    <source>
        <dbReference type="PROSITE-ProRule" id="PRU10133"/>
    </source>
</evidence>
<evidence type="ECO:0000256" key="3">
    <source>
        <dbReference type="SAM" id="MobiDB-lite"/>
    </source>
</evidence>
<comment type="function">
    <text evidence="1">Catalyzes the covalent attachment of ubiquitin to other proteins. Acts as an essential factor of the anaphase promoting complex/cyclosome (APC/C), a cell cycle-regulated ubiquitin ligase that controls progression through mitosis. Acts by specifically elongating 'Lys-11'-linked polyubiquitin chains initiated by the E2 enzyme ube2c/ubch10 on APC/C substrates, enhancing the degradation of APC/C substrates by the proteasome and promoting mitotic exit.</text>
</comment>
<comment type="catalytic activity">
    <reaction evidence="1 2">
        <text>S-ubiquitinyl-[E1 ubiquitin-activating enzyme]-L-cysteine + [E2 ubiquitin-conjugating enzyme]-L-cysteine = [E1 ubiquitin-activating enzyme]-L-cysteine + S-ubiquitinyl-[E2 ubiquitin-conjugating enzyme]-L-cysteine.</text>
        <dbReference type="EC" id="2.3.2.23"/>
    </reaction>
</comment>
<comment type="pathway">
    <text evidence="1">Protein modification; protein ubiquitination.</text>
</comment>
<comment type="similarity">
    <text evidence="1">Belongs to the ubiquitin-conjugating enzyme family.</text>
</comment>
<dbReference type="EC" id="2.3.2.23"/>
<dbReference type="EMBL" id="CR761031">
    <property type="protein sequence ID" value="CAJ83662.1"/>
    <property type="molecule type" value="mRNA"/>
</dbReference>
<dbReference type="EMBL" id="CR761379">
    <property type="protein sequence ID" value="CAJ82166.1"/>
    <property type="molecule type" value="mRNA"/>
</dbReference>
<dbReference type="EMBL" id="CR762108">
    <property type="protein sequence ID" value="CAJ81686.1"/>
    <property type="molecule type" value="mRNA"/>
</dbReference>
<dbReference type="EMBL" id="BC170651">
    <property type="protein sequence ID" value="AAI70651.1"/>
    <property type="molecule type" value="mRNA"/>
</dbReference>
<dbReference type="EMBL" id="BC170653">
    <property type="protein sequence ID" value="AAI70653.1"/>
    <property type="molecule type" value="mRNA"/>
</dbReference>
<dbReference type="RefSeq" id="NP_001016438.1">
    <property type="nucleotide sequence ID" value="NM_001016438.2"/>
</dbReference>
<dbReference type="SMR" id="Q28F89"/>
<dbReference type="FunCoup" id="Q28F89">
    <property type="interactions" value="3632"/>
</dbReference>
<dbReference type="STRING" id="8364.ENSXETP00000031793"/>
<dbReference type="PaxDb" id="8364-ENSXETP00000063683"/>
<dbReference type="GeneID" id="549192"/>
<dbReference type="KEGG" id="xtr:549192"/>
<dbReference type="AGR" id="Xenbase:XB-GENE-1008017"/>
<dbReference type="CTD" id="27338"/>
<dbReference type="Xenbase" id="XB-GENE-1008017">
    <property type="gene designation" value="ube2s"/>
</dbReference>
<dbReference type="eggNOG" id="KOG0423">
    <property type="taxonomic scope" value="Eukaryota"/>
</dbReference>
<dbReference type="HOGENOM" id="CLU_030988_5_3_1"/>
<dbReference type="InParanoid" id="Q28F89"/>
<dbReference type="OMA" id="QPAKCGA"/>
<dbReference type="OrthoDB" id="10069349at2759"/>
<dbReference type="PhylomeDB" id="Q28F89"/>
<dbReference type="TreeFam" id="TF101120"/>
<dbReference type="UniPathway" id="UPA00143"/>
<dbReference type="Proteomes" id="UP000008143">
    <property type="component" value="Chromosome 7"/>
</dbReference>
<dbReference type="Bgee" id="ENSXETG00000000138">
    <property type="expression patterns" value="Expressed in 4-cell stage embryo and 26 other cell types or tissues"/>
</dbReference>
<dbReference type="GO" id="GO:0005680">
    <property type="term" value="C:anaphase-promoting complex"/>
    <property type="evidence" value="ECO:0000250"/>
    <property type="project" value="UniProtKB"/>
</dbReference>
<dbReference type="GO" id="GO:0005524">
    <property type="term" value="F:ATP binding"/>
    <property type="evidence" value="ECO:0007669"/>
    <property type="project" value="UniProtKB-KW"/>
</dbReference>
<dbReference type="GO" id="GO:0061631">
    <property type="term" value="F:ubiquitin conjugating enzyme activity"/>
    <property type="evidence" value="ECO:0007669"/>
    <property type="project" value="UniProtKB-EC"/>
</dbReference>
<dbReference type="GO" id="GO:0031145">
    <property type="term" value="P:anaphase-promoting complex-dependent catabolic process"/>
    <property type="evidence" value="ECO:0000250"/>
    <property type="project" value="UniProtKB"/>
</dbReference>
<dbReference type="GO" id="GO:0051301">
    <property type="term" value="P:cell division"/>
    <property type="evidence" value="ECO:0007669"/>
    <property type="project" value="UniProtKB-KW"/>
</dbReference>
<dbReference type="GO" id="GO:0010458">
    <property type="term" value="P:exit from mitosis"/>
    <property type="evidence" value="ECO:0000250"/>
    <property type="project" value="UniProtKB"/>
</dbReference>
<dbReference type="GO" id="GO:0010994">
    <property type="term" value="P:free ubiquitin chain polymerization"/>
    <property type="evidence" value="ECO:0000250"/>
    <property type="project" value="UniProtKB"/>
</dbReference>
<dbReference type="GO" id="GO:1904668">
    <property type="term" value="P:positive regulation of ubiquitin protein ligase activity"/>
    <property type="evidence" value="ECO:0000250"/>
    <property type="project" value="UniProtKB"/>
</dbReference>
<dbReference type="GO" id="GO:0070979">
    <property type="term" value="P:protein K11-linked ubiquitination"/>
    <property type="evidence" value="ECO:0000250"/>
    <property type="project" value="UniProtKB"/>
</dbReference>
<dbReference type="CDD" id="cd23804">
    <property type="entry name" value="UBCc_UBE2S"/>
    <property type="match status" value="1"/>
</dbReference>
<dbReference type="FunFam" id="3.10.110.10:FF:000034">
    <property type="entry name" value="Ubiquitin-conjugating enzyme E2 S"/>
    <property type="match status" value="1"/>
</dbReference>
<dbReference type="Gene3D" id="3.10.110.10">
    <property type="entry name" value="Ubiquitin Conjugating Enzyme"/>
    <property type="match status" value="1"/>
</dbReference>
<dbReference type="InterPro" id="IPR050113">
    <property type="entry name" value="Ub_conjugating_enzyme"/>
</dbReference>
<dbReference type="InterPro" id="IPR000608">
    <property type="entry name" value="UBQ-conjugat_E2_core"/>
</dbReference>
<dbReference type="InterPro" id="IPR023313">
    <property type="entry name" value="UBQ-conjugating_AS"/>
</dbReference>
<dbReference type="InterPro" id="IPR016135">
    <property type="entry name" value="UBQ-conjugating_enzyme/RWD"/>
</dbReference>
<dbReference type="PANTHER" id="PTHR24067">
    <property type="entry name" value="UBIQUITIN-CONJUGATING ENZYME E2"/>
    <property type="match status" value="1"/>
</dbReference>
<dbReference type="Pfam" id="PF00179">
    <property type="entry name" value="UQ_con"/>
    <property type="match status" value="1"/>
</dbReference>
<dbReference type="SMART" id="SM00212">
    <property type="entry name" value="UBCc"/>
    <property type="match status" value="1"/>
</dbReference>
<dbReference type="SUPFAM" id="SSF54495">
    <property type="entry name" value="UBC-like"/>
    <property type="match status" value="1"/>
</dbReference>
<dbReference type="PROSITE" id="PS00183">
    <property type="entry name" value="UBC_1"/>
    <property type="match status" value="1"/>
</dbReference>
<dbReference type="PROSITE" id="PS50127">
    <property type="entry name" value="UBC_2"/>
    <property type="match status" value="1"/>
</dbReference>
<gene>
    <name type="primary">ube2s</name>
    <name type="ORF">TEgg003m12.1</name>
    <name type="ORF">TEgg028l19.1</name>
</gene>
<proteinExistence type="evidence at transcript level"/>
<protein>
    <recommendedName>
        <fullName>Ubiquitin-conjugating enzyme E2 S</fullName>
        <ecNumber>2.3.2.23</ecNumber>
    </recommendedName>
    <alternativeName>
        <fullName>E2 ubiquitin-conjugating enzyme S</fullName>
    </alternativeName>
    <alternativeName>
        <fullName>Ubiquitin carrier protein S</fullName>
    </alternativeName>
    <alternativeName>
        <fullName>Ubiquitin-protein ligase S</fullName>
    </alternativeName>
</protein>